<reference key="1">
    <citation type="submission" date="2007-03" db="EMBL/GenBank/DDBJ databases">
        <title>Complete sequence of Shewanella loihica PV-4.</title>
        <authorList>
            <consortium name="US DOE Joint Genome Institute"/>
            <person name="Copeland A."/>
            <person name="Lucas S."/>
            <person name="Lapidus A."/>
            <person name="Barry K."/>
            <person name="Detter J.C."/>
            <person name="Glavina del Rio T."/>
            <person name="Hammon N."/>
            <person name="Israni S."/>
            <person name="Dalin E."/>
            <person name="Tice H."/>
            <person name="Pitluck S."/>
            <person name="Chain P."/>
            <person name="Malfatti S."/>
            <person name="Shin M."/>
            <person name="Vergez L."/>
            <person name="Schmutz J."/>
            <person name="Larimer F."/>
            <person name="Land M."/>
            <person name="Hauser L."/>
            <person name="Kyrpides N."/>
            <person name="Mikhailova N."/>
            <person name="Romine M.F."/>
            <person name="Serres G."/>
            <person name="Fredrickson J."/>
            <person name="Tiedje J."/>
            <person name="Richardson P."/>
        </authorList>
    </citation>
    <scope>NUCLEOTIDE SEQUENCE [LARGE SCALE GENOMIC DNA]</scope>
    <source>
        <strain>ATCC BAA-1088 / PV-4</strain>
    </source>
</reference>
<comment type="function">
    <text evidence="1">With S4 and S12 plays an important role in translational accuracy.</text>
</comment>
<comment type="function">
    <text evidence="1">Located at the back of the 30S subunit body where it stabilizes the conformation of the head with respect to the body.</text>
</comment>
<comment type="subunit">
    <text evidence="1">Part of the 30S ribosomal subunit. Contacts proteins S4 and S8.</text>
</comment>
<comment type="domain">
    <text>The N-terminal domain interacts with the head of the 30S subunit; the C-terminal domain interacts with the body and contacts protein S4. The interaction surface between S4 and S5 is involved in control of translational fidelity.</text>
</comment>
<comment type="similarity">
    <text evidence="1">Belongs to the universal ribosomal protein uS5 family.</text>
</comment>
<dbReference type="EMBL" id="CP000606">
    <property type="protein sequence ID" value="ABO22047.1"/>
    <property type="molecule type" value="Genomic_DNA"/>
</dbReference>
<dbReference type="RefSeq" id="WP_011863983.1">
    <property type="nucleotide sequence ID" value="NC_009092.1"/>
</dbReference>
<dbReference type="SMR" id="A3Q999"/>
<dbReference type="STRING" id="323850.Shew_0175"/>
<dbReference type="KEGG" id="slo:Shew_0175"/>
<dbReference type="eggNOG" id="COG0098">
    <property type="taxonomic scope" value="Bacteria"/>
</dbReference>
<dbReference type="HOGENOM" id="CLU_065898_2_2_6"/>
<dbReference type="OrthoDB" id="9809045at2"/>
<dbReference type="Proteomes" id="UP000001558">
    <property type="component" value="Chromosome"/>
</dbReference>
<dbReference type="GO" id="GO:0015935">
    <property type="term" value="C:small ribosomal subunit"/>
    <property type="evidence" value="ECO:0007669"/>
    <property type="project" value="InterPro"/>
</dbReference>
<dbReference type="GO" id="GO:0019843">
    <property type="term" value="F:rRNA binding"/>
    <property type="evidence" value="ECO:0007669"/>
    <property type="project" value="UniProtKB-UniRule"/>
</dbReference>
<dbReference type="GO" id="GO:0003735">
    <property type="term" value="F:structural constituent of ribosome"/>
    <property type="evidence" value="ECO:0007669"/>
    <property type="project" value="InterPro"/>
</dbReference>
<dbReference type="GO" id="GO:0006412">
    <property type="term" value="P:translation"/>
    <property type="evidence" value="ECO:0007669"/>
    <property type="project" value="UniProtKB-UniRule"/>
</dbReference>
<dbReference type="FunFam" id="3.30.160.20:FF:000001">
    <property type="entry name" value="30S ribosomal protein S5"/>
    <property type="match status" value="1"/>
</dbReference>
<dbReference type="FunFam" id="3.30.230.10:FF:000002">
    <property type="entry name" value="30S ribosomal protein S5"/>
    <property type="match status" value="1"/>
</dbReference>
<dbReference type="Gene3D" id="3.30.160.20">
    <property type="match status" value="1"/>
</dbReference>
<dbReference type="Gene3D" id="3.30.230.10">
    <property type="match status" value="1"/>
</dbReference>
<dbReference type="HAMAP" id="MF_01307_B">
    <property type="entry name" value="Ribosomal_uS5_B"/>
    <property type="match status" value="1"/>
</dbReference>
<dbReference type="InterPro" id="IPR020568">
    <property type="entry name" value="Ribosomal_Su5_D2-typ_SF"/>
</dbReference>
<dbReference type="InterPro" id="IPR000851">
    <property type="entry name" value="Ribosomal_uS5"/>
</dbReference>
<dbReference type="InterPro" id="IPR005712">
    <property type="entry name" value="Ribosomal_uS5_bac-type"/>
</dbReference>
<dbReference type="InterPro" id="IPR005324">
    <property type="entry name" value="Ribosomal_uS5_C"/>
</dbReference>
<dbReference type="InterPro" id="IPR013810">
    <property type="entry name" value="Ribosomal_uS5_N"/>
</dbReference>
<dbReference type="InterPro" id="IPR018192">
    <property type="entry name" value="Ribosomal_uS5_N_CS"/>
</dbReference>
<dbReference type="InterPro" id="IPR014721">
    <property type="entry name" value="Ribsml_uS5_D2-typ_fold_subgr"/>
</dbReference>
<dbReference type="NCBIfam" id="TIGR01021">
    <property type="entry name" value="rpsE_bact"/>
    <property type="match status" value="1"/>
</dbReference>
<dbReference type="PANTHER" id="PTHR48277">
    <property type="entry name" value="MITOCHONDRIAL RIBOSOMAL PROTEIN S5"/>
    <property type="match status" value="1"/>
</dbReference>
<dbReference type="PANTHER" id="PTHR48277:SF1">
    <property type="entry name" value="MITOCHONDRIAL RIBOSOMAL PROTEIN S5"/>
    <property type="match status" value="1"/>
</dbReference>
<dbReference type="Pfam" id="PF00333">
    <property type="entry name" value="Ribosomal_S5"/>
    <property type="match status" value="1"/>
</dbReference>
<dbReference type="Pfam" id="PF03719">
    <property type="entry name" value="Ribosomal_S5_C"/>
    <property type="match status" value="1"/>
</dbReference>
<dbReference type="SUPFAM" id="SSF54768">
    <property type="entry name" value="dsRNA-binding domain-like"/>
    <property type="match status" value="1"/>
</dbReference>
<dbReference type="SUPFAM" id="SSF54211">
    <property type="entry name" value="Ribosomal protein S5 domain 2-like"/>
    <property type="match status" value="1"/>
</dbReference>
<dbReference type="PROSITE" id="PS00585">
    <property type="entry name" value="RIBOSOMAL_S5"/>
    <property type="match status" value="1"/>
</dbReference>
<dbReference type="PROSITE" id="PS50881">
    <property type="entry name" value="S5_DSRBD"/>
    <property type="match status" value="1"/>
</dbReference>
<organism>
    <name type="scientific">Shewanella loihica (strain ATCC BAA-1088 / PV-4)</name>
    <dbReference type="NCBI Taxonomy" id="323850"/>
    <lineage>
        <taxon>Bacteria</taxon>
        <taxon>Pseudomonadati</taxon>
        <taxon>Pseudomonadota</taxon>
        <taxon>Gammaproteobacteria</taxon>
        <taxon>Alteromonadales</taxon>
        <taxon>Shewanellaceae</taxon>
        <taxon>Shewanella</taxon>
    </lineage>
</organism>
<protein>
    <recommendedName>
        <fullName evidence="1">Small ribosomal subunit protein uS5</fullName>
    </recommendedName>
    <alternativeName>
        <fullName evidence="2">30S ribosomal protein S5</fullName>
    </alternativeName>
</protein>
<proteinExistence type="inferred from homology"/>
<keyword id="KW-1185">Reference proteome</keyword>
<keyword id="KW-0687">Ribonucleoprotein</keyword>
<keyword id="KW-0689">Ribosomal protein</keyword>
<keyword id="KW-0694">RNA-binding</keyword>
<keyword id="KW-0699">rRNA-binding</keyword>
<evidence type="ECO:0000255" key="1">
    <source>
        <dbReference type="HAMAP-Rule" id="MF_01307"/>
    </source>
</evidence>
<evidence type="ECO:0000305" key="2"/>
<name>RS5_SHELP</name>
<sequence>MAKFEAPQKDDLQEKLVAVNRVSKVVKGGRIFSFTALTVVGDGNGKVGYGYGKAREVPAAIQKAMEKARRNIVSVELVNGTLHHPVKGRHTGSRVYMQPASEGTGIIAGGAMRAVLEVAGVHNVLSKAYGSTNPINIVRATVDALVHMKSPAQIAAKRGLNVDEIRG</sequence>
<gene>
    <name evidence="1" type="primary">rpsE</name>
    <name type="ordered locus">Shew_0175</name>
</gene>
<accession>A3Q999</accession>
<feature type="chain" id="PRO_0000323197" description="Small ribosomal subunit protein uS5">
    <location>
        <begin position="1"/>
        <end position="167"/>
    </location>
</feature>
<feature type="domain" description="S5 DRBM" evidence="1">
    <location>
        <begin position="12"/>
        <end position="75"/>
    </location>
</feature>